<organism>
    <name type="scientific">Prochlorococcus marinus (strain SARG / CCMP1375 / SS120)</name>
    <dbReference type="NCBI Taxonomy" id="167539"/>
    <lineage>
        <taxon>Bacteria</taxon>
        <taxon>Bacillati</taxon>
        <taxon>Cyanobacteriota</taxon>
        <taxon>Cyanophyceae</taxon>
        <taxon>Synechococcales</taxon>
        <taxon>Prochlorococcaceae</taxon>
        <taxon>Prochlorococcus</taxon>
    </lineage>
</organism>
<comment type="function">
    <text evidence="1">Catalyzes amidations at positions B, D, E, and G on adenosylcobyrinic A,C-diamide. NH(2) groups are provided by glutamine, and one molecule of ATP is hydrogenolyzed for each amidation.</text>
</comment>
<comment type="pathway">
    <text evidence="1">Cofactor biosynthesis; adenosylcobalamin biosynthesis.</text>
</comment>
<comment type="similarity">
    <text evidence="1">Belongs to the CobB/CobQ family. CobQ subfamily.</text>
</comment>
<name>COBQ_PROMA</name>
<accession>Q7VB41</accession>
<gene>
    <name evidence="1" type="primary">cobQ</name>
    <name type="ordered locus">Pro_1259</name>
</gene>
<proteinExistence type="inferred from homology"/>
<protein>
    <recommendedName>
        <fullName evidence="1">Cobyric acid synthase</fullName>
    </recommendedName>
</protein>
<sequence length="507" mass="56154">MKNISAGHNALMVLGTSSGAGKSIITTAICRSLLRKGEVPIPFKGQNMSNNAWVDINNGEMAYSQAVQAWAAGIEPICAMNPVLLKPQGDCTSEVIHLGKSVGVVQAANYYEDWFSSGWEAIQKGLNDIATSYKKHRLILEGAGSPVEINLQHRDLTNLKLAKHLNAKCVLVADIERGGVFAQIIGTLALLKPDEKALIQGIIINRFRGDISLFEKGRQWIEEESKIPVLGIMPWLNEIFPPEDSLDLLERKHKKTKAEIQIAVIKLPSLSNFADLDPLEAEPTIQLNWIQPGDYLGNPNAVIIPGSKQTLKDLQSLQSSGLGNQIKEFASSGGTVFGICGGLQILGEKLEDPLGIEQSFLETSISELEGLSLIPIKTIFHSKKSLTKKDVISKWPDESRIMGFELHHGESTPTNSQKVKVKDLCNETSLGWVNEECNPIKAAGTYLHGIFDNGTWRRLWINQIRKKANLYELPLLEENHDAKREKVINRLTDVFEENINLEYLLKT</sequence>
<dbReference type="EMBL" id="AE017126">
    <property type="protein sequence ID" value="AAQ00303.1"/>
    <property type="molecule type" value="Genomic_DNA"/>
</dbReference>
<dbReference type="RefSeq" id="NP_875650.1">
    <property type="nucleotide sequence ID" value="NC_005042.1"/>
</dbReference>
<dbReference type="RefSeq" id="WP_011125410.1">
    <property type="nucleotide sequence ID" value="NC_005042.1"/>
</dbReference>
<dbReference type="STRING" id="167539.Pro_1259"/>
<dbReference type="EnsemblBacteria" id="AAQ00303">
    <property type="protein sequence ID" value="AAQ00303"/>
    <property type="gene ID" value="Pro_1259"/>
</dbReference>
<dbReference type="KEGG" id="pma:Pro_1259"/>
<dbReference type="PATRIC" id="fig|167539.5.peg.1321"/>
<dbReference type="eggNOG" id="COG1492">
    <property type="taxonomic scope" value="Bacteria"/>
</dbReference>
<dbReference type="HOGENOM" id="CLU_019250_2_2_3"/>
<dbReference type="OrthoDB" id="9808302at2"/>
<dbReference type="UniPathway" id="UPA00148"/>
<dbReference type="Proteomes" id="UP000001420">
    <property type="component" value="Chromosome"/>
</dbReference>
<dbReference type="GO" id="GO:0015420">
    <property type="term" value="F:ABC-type vitamin B12 transporter activity"/>
    <property type="evidence" value="ECO:0007669"/>
    <property type="project" value="UniProtKB-UniRule"/>
</dbReference>
<dbReference type="GO" id="GO:0003824">
    <property type="term" value="F:catalytic activity"/>
    <property type="evidence" value="ECO:0007669"/>
    <property type="project" value="InterPro"/>
</dbReference>
<dbReference type="GO" id="GO:0009236">
    <property type="term" value="P:cobalamin biosynthetic process"/>
    <property type="evidence" value="ECO:0007669"/>
    <property type="project" value="UniProtKB-UniRule"/>
</dbReference>
<dbReference type="CDD" id="cd01750">
    <property type="entry name" value="GATase1_CobQ"/>
    <property type="match status" value="1"/>
</dbReference>
<dbReference type="Gene3D" id="3.40.50.880">
    <property type="match status" value="1"/>
</dbReference>
<dbReference type="Gene3D" id="3.40.50.300">
    <property type="entry name" value="P-loop containing nucleotide triphosphate hydrolases"/>
    <property type="match status" value="1"/>
</dbReference>
<dbReference type="HAMAP" id="MF_00028">
    <property type="entry name" value="CobQ"/>
    <property type="match status" value="1"/>
</dbReference>
<dbReference type="InterPro" id="IPR029062">
    <property type="entry name" value="Class_I_gatase-like"/>
</dbReference>
<dbReference type="InterPro" id="IPR002586">
    <property type="entry name" value="CobQ/CobB/MinD/ParA_Nub-bd_dom"/>
</dbReference>
<dbReference type="InterPro" id="IPR033949">
    <property type="entry name" value="CobQ_GATase1"/>
</dbReference>
<dbReference type="InterPro" id="IPR004459">
    <property type="entry name" value="CobQ_synth"/>
</dbReference>
<dbReference type="InterPro" id="IPR011698">
    <property type="entry name" value="GATase_3"/>
</dbReference>
<dbReference type="InterPro" id="IPR027417">
    <property type="entry name" value="P-loop_NTPase"/>
</dbReference>
<dbReference type="NCBIfam" id="TIGR00313">
    <property type="entry name" value="cobQ"/>
    <property type="match status" value="1"/>
</dbReference>
<dbReference type="NCBIfam" id="NF001989">
    <property type="entry name" value="PRK00784.1"/>
    <property type="match status" value="1"/>
</dbReference>
<dbReference type="PANTHER" id="PTHR21343:SF1">
    <property type="entry name" value="COBYRIC ACID SYNTHASE"/>
    <property type="match status" value="1"/>
</dbReference>
<dbReference type="PANTHER" id="PTHR21343">
    <property type="entry name" value="DETHIOBIOTIN SYNTHETASE"/>
    <property type="match status" value="1"/>
</dbReference>
<dbReference type="Pfam" id="PF01656">
    <property type="entry name" value="CbiA"/>
    <property type="match status" value="1"/>
</dbReference>
<dbReference type="Pfam" id="PF07685">
    <property type="entry name" value="GATase_3"/>
    <property type="match status" value="1"/>
</dbReference>
<dbReference type="SUPFAM" id="SSF52317">
    <property type="entry name" value="Class I glutamine amidotransferase-like"/>
    <property type="match status" value="1"/>
</dbReference>
<dbReference type="SUPFAM" id="SSF52540">
    <property type="entry name" value="P-loop containing nucleoside triphosphate hydrolases"/>
    <property type="match status" value="1"/>
</dbReference>
<dbReference type="PROSITE" id="PS51274">
    <property type="entry name" value="GATASE_COBBQ"/>
    <property type="match status" value="1"/>
</dbReference>
<feature type="chain" id="PRO_0000141317" description="Cobyric acid synthase">
    <location>
        <begin position="1"/>
        <end position="507"/>
    </location>
</feature>
<feature type="domain" description="GATase cobBQ-type" evidence="1">
    <location>
        <begin position="259"/>
        <end position="456"/>
    </location>
</feature>
<feature type="active site" description="Nucleophile" evidence="1">
    <location>
        <position position="340"/>
    </location>
</feature>
<feature type="active site" evidence="1">
    <location>
        <position position="448"/>
    </location>
</feature>
<keyword id="KW-0169">Cobalamin biosynthesis</keyword>
<keyword id="KW-0315">Glutamine amidotransferase</keyword>
<keyword id="KW-1185">Reference proteome</keyword>
<reference key="1">
    <citation type="journal article" date="2003" name="Proc. Natl. Acad. Sci. U.S.A.">
        <title>Genome sequence of the cyanobacterium Prochlorococcus marinus SS120, a nearly minimal oxyphototrophic genome.</title>
        <authorList>
            <person name="Dufresne A."/>
            <person name="Salanoubat M."/>
            <person name="Partensky F."/>
            <person name="Artiguenave F."/>
            <person name="Axmann I.M."/>
            <person name="Barbe V."/>
            <person name="Duprat S."/>
            <person name="Galperin M.Y."/>
            <person name="Koonin E.V."/>
            <person name="Le Gall F."/>
            <person name="Makarova K.S."/>
            <person name="Ostrowski M."/>
            <person name="Oztas S."/>
            <person name="Robert C."/>
            <person name="Rogozin I.B."/>
            <person name="Scanlan D.J."/>
            <person name="Tandeau de Marsac N."/>
            <person name="Weissenbach J."/>
            <person name="Wincker P."/>
            <person name="Wolf Y.I."/>
            <person name="Hess W.R."/>
        </authorList>
    </citation>
    <scope>NUCLEOTIDE SEQUENCE [LARGE SCALE GENOMIC DNA]</scope>
    <source>
        <strain>SARG / CCMP1375 / SS120</strain>
    </source>
</reference>
<evidence type="ECO:0000255" key="1">
    <source>
        <dbReference type="HAMAP-Rule" id="MF_00028"/>
    </source>
</evidence>